<dbReference type="EMBL" id="AE006468">
    <property type="protein sequence ID" value="AAL19085.1"/>
    <property type="molecule type" value="Genomic_DNA"/>
</dbReference>
<dbReference type="RefSeq" id="NP_459126.1">
    <property type="nucleotide sequence ID" value="NC_003197.2"/>
</dbReference>
<dbReference type="RefSeq" id="WP_000625651.1">
    <property type="nucleotide sequence ID" value="NC_003197.2"/>
</dbReference>
<dbReference type="SMR" id="Q7CR84"/>
<dbReference type="STRING" id="99287.STM0121"/>
<dbReference type="PaxDb" id="99287-STM0121"/>
<dbReference type="DNASU" id="1251639"/>
<dbReference type="GeneID" id="1251639"/>
<dbReference type="GeneID" id="87002733"/>
<dbReference type="KEGG" id="stm:STM0121"/>
<dbReference type="PATRIC" id="fig|99287.12.peg.127"/>
<dbReference type="HOGENOM" id="CLU_156524_2_0_6"/>
<dbReference type="OMA" id="DLWHHKW"/>
<dbReference type="PhylomeDB" id="Q7CR84"/>
<dbReference type="BioCyc" id="SENT99287:STM0121-MONOMER"/>
<dbReference type="Proteomes" id="UP000001014">
    <property type="component" value="Chromosome"/>
</dbReference>
<dbReference type="GO" id="GO:0032153">
    <property type="term" value="C:cell division site"/>
    <property type="evidence" value="ECO:0000318"/>
    <property type="project" value="GO_Central"/>
</dbReference>
<dbReference type="GO" id="GO:0005886">
    <property type="term" value="C:plasma membrane"/>
    <property type="evidence" value="ECO:0000318"/>
    <property type="project" value="GO_Central"/>
</dbReference>
<dbReference type="GO" id="GO:0043093">
    <property type="term" value="P:FtsZ-dependent cytokinesis"/>
    <property type="evidence" value="ECO:0000318"/>
    <property type="project" value="GO_Central"/>
</dbReference>
<dbReference type="HAMAP" id="MF_00910">
    <property type="entry name" value="FtsL"/>
    <property type="match status" value="1"/>
</dbReference>
<dbReference type="InterPro" id="IPR011922">
    <property type="entry name" value="Cell_div_FtsL"/>
</dbReference>
<dbReference type="NCBIfam" id="TIGR02209">
    <property type="entry name" value="ftsL_broad"/>
    <property type="match status" value="1"/>
</dbReference>
<dbReference type="NCBIfam" id="NF008040">
    <property type="entry name" value="PRK10772.1"/>
    <property type="match status" value="1"/>
</dbReference>
<dbReference type="PANTHER" id="PTHR37479">
    <property type="entry name" value="CELL DIVISION PROTEIN FTSL"/>
    <property type="match status" value="1"/>
</dbReference>
<dbReference type="PANTHER" id="PTHR37479:SF1">
    <property type="entry name" value="CELL DIVISION PROTEIN FTSL"/>
    <property type="match status" value="1"/>
</dbReference>
<dbReference type="Pfam" id="PF04999">
    <property type="entry name" value="FtsL"/>
    <property type="match status" value="1"/>
</dbReference>
<gene>
    <name evidence="1" type="primary">ftsL</name>
    <name type="ordered locus">STM0121</name>
</gene>
<feature type="chain" id="PRO_0000414567" description="Cell division protein FtsL">
    <location>
        <begin position="1"/>
        <end position="121"/>
    </location>
</feature>
<feature type="topological domain" description="Cytoplasmic" evidence="1">
    <location>
        <begin position="1"/>
        <end position="34"/>
    </location>
</feature>
<feature type="transmembrane region" description="Helical" evidence="1">
    <location>
        <begin position="35"/>
        <end position="57"/>
    </location>
</feature>
<feature type="topological domain" description="Periplasmic" evidence="1">
    <location>
        <begin position="58"/>
        <end position="121"/>
    </location>
</feature>
<accession>Q7CR84</accession>
<comment type="function">
    <text evidence="1">Essential cell division protein. May link together the upstream cell division proteins, which are predominantly cytoplasmic, with the downstream cell division proteins, which are predominantly periplasmic.</text>
</comment>
<comment type="subunit">
    <text evidence="1">Part of a complex composed of FtsB, FtsL and FtsQ.</text>
</comment>
<comment type="subcellular location">
    <subcellularLocation>
        <location evidence="1">Cell inner membrane</location>
        <topology evidence="1">Single-pass type II membrane protein</topology>
    </subcellularLocation>
    <text evidence="1">Localizes to the division septum where it forms a ring structure.</text>
</comment>
<comment type="similarity">
    <text evidence="1">Belongs to the FtsL family.</text>
</comment>
<reference key="1">
    <citation type="journal article" date="2001" name="Nature">
        <title>Complete genome sequence of Salmonella enterica serovar Typhimurium LT2.</title>
        <authorList>
            <person name="McClelland M."/>
            <person name="Sanderson K.E."/>
            <person name="Spieth J."/>
            <person name="Clifton S.W."/>
            <person name="Latreille P."/>
            <person name="Courtney L."/>
            <person name="Porwollik S."/>
            <person name="Ali J."/>
            <person name="Dante M."/>
            <person name="Du F."/>
            <person name="Hou S."/>
            <person name="Layman D."/>
            <person name="Leonard S."/>
            <person name="Nguyen C."/>
            <person name="Scott K."/>
            <person name="Holmes A."/>
            <person name="Grewal N."/>
            <person name="Mulvaney E."/>
            <person name="Ryan E."/>
            <person name="Sun H."/>
            <person name="Florea L."/>
            <person name="Miller W."/>
            <person name="Stoneking T."/>
            <person name="Nhan M."/>
            <person name="Waterston R."/>
            <person name="Wilson R.K."/>
        </authorList>
    </citation>
    <scope>NUCLEOTIDE SEQUENCE [LARGE SCALE GENOMIC DNA]</scope>
    <source>
        <strain>LT2 / SGSC1412 / ATCC 700720</strain>
    </source>
</reference>
<organism>
    <name type="scientific">Salmonella typhimurium (strain LT2 / SGSC1412 / ATCC 700720)</name>
    <dbReference type="NCBI Taxonomy" id="99287"/>
    <lineage>
        <taxon>Bacteria</taxon>
        <taxon>Pseudomonadati</taxon>
        <taxon>Pseudomonadota</taxon>
        <taxon>Gammaproteobacteria</taxon>
        <taxon>Enterobacterales</taxon>
        <taxon>Enterobacteriaceae</taxon>
        <taxon>Salmonella</taxon>
    </lineage>
</organism>
<protein>
    <recommendedName>
        <fullName evidence="1">Cell division protein FtsL</fullName>
    </recommendedName>
</protein>
<name>FTSL_SALTY</name>
<proteinExistence type="inferred from homology"/>
<evidence type="ECO:0000255" key="1">
    <source>
        <dbReference type="HAMAP-Rule" id="MF_00910"/>
    </source>
</evidence>
<sequence length="121" mass="13586">MISRVTEALSKVKGSIGSNERHALPGVIGDDLLRFGKLPLCLFICIILTAVTVVTTAHHTRLLTAQREQLVLERDALDIEWRNLILEENALGDHSRVERIATEKLQMQHVDPSQENIVVQK</sequence>
<keyword id="KW-0131">Cell cycle</keyword>
<keyword id="KW-0132">Cell division</keyword>
<keyword id="KW-0997">Cell inner membrane</keyword>
<keyword id="KW-1003">Cell membrane</keyword>
<keyword id="KW-0472">Membrane</keyword>
<keyword id="KW-1185">Reference proteome</keyword>
<keyword id="KW-0812">Transmembrane</keyword>
<keyword id="KW-1133">Transmembrane helix</keyword>